<dbReference type="EMBL" id="CP001138">
    <property type="protein sequence ID" value="ACH50943.1"/>
    <property type="molecule type" value="Genomic_DNA"/>
</dbReference>
<dbReference type="RefSeq" id="WP_000511329.1">
    <property type="nucleotide sequence ID" value="NC_011149.1"/>
</dbReference>
<dbReference type="KEGG" id="sea:SeAg_B4866"/>
<dbReference type="HOGENOM" id="CLU_117642_1_0_6"/>
<dbReference type="Proteomes" id="UP000008819">
    <property type="component" value="Chromosome"/>
</dbReference>
<dbReference type="GO" id="GO:0005886">
    <property type="term" value="C:plasma membrane"/>
    <property type="evidence" value="ECO:0007669"/>
    <property type="project" value="UniProtKB-SubCell"/>
</dbReference>
<dbReference type="GO" id="GO:0015744">
    <property type="term" value="P:succinate transport"/>
    <property type="evidence" value="ECO:0007669"/>
    <property type="project" value="UniProtKB-UniRule"/>
</dbReference>
<dbReference type="HAMAP" id="MF_01191">
    <property type="entry name" value="YjjB"/>
    <property type="match status" value="1"/>
</dbReference>
<dbReference type="InterPro" id="IPR024528">
    <property type="entry name" value="ThrE_2"/>
</dbReference>
<dbReference type="InterPro" id="IPR050539">
    <property type="entry name" value="ThrE_Dicarb/AminoAcid_Exp"/>
</dbReference>
<dbReference type="InterPro" id="IPR020914">
    <property type="entry name" value="YjjB"/>
</dbReference>
<dbReference type="NCBIfam" id="NF007391">
    <property type="entry name" value="PRK09917.1"/>
    <property type="match status" value="1"/>
</dbReference>
<dbReference type="PANTHER" id="PTHR34390:SF1">
    <property type="entry name" value="SUCCINATE TRANSPORTER SUBUNIT YJJB-RELATED"/>
    <property type="match status" value="1"/>
</dbReference>
<dbReference type="PANTHER" id="PTHR34390">
    <property type="entry name" value="UPF0442 PROTEIN YJJB-RELATED"/>
    <property type="match status" value="1"/>
</dbReference>
<dbReference type="Pfam" id="PF12821">
    <property type="entry name" value="ThrE_2"/>
    <property type="match status" value="1"/>
</dbReference>
<comment type="function">
    <text evidence="1">Involved in succinate export with YjjP. Both proteins are required for export.</text>
</comment>
<comment type="subunit">
    <text evidence="1">The transporter is composed of YjjB and YjjP.</text>
</comment>
<comment type="subcellular location">
    <subcellularLocation>
        <location evidence="1">Cell inner membrane</location>
        <topology evidence="1">Multi-pass membrane protein</topology>
    </subcellularLocation>
</comment>
<comment type="similarity">
    <text evidence="1">Belongs to the ThrE exporter (TC 2.A.79) family.</text>
</comment>
<reference key="1">
    <citation type="journal article" date="2011" name="J. Bacteriol.">
        <title>Comparative genomics of 28 Salmonella enterica isolates: evidence for CRISPR-mediated adaptive sublineage evolution.</title>
        <authorList>
            <person name="Fricke W.F."/>
            <person name="Mammel M.K."/>
            <person name="McDermott P.F."/>
            <person name="Tartera C."/>
            <person name="White D.G."/>
            <person name="Leclerc J.E."/>
            <person name="Ravel J."/>
            <person name="Cebula T.A."/>
        </authorList>
    </citation>
    <scope>NUCLEOTIDE SEQUENCE [LARGE SCALE GENOMIC DNA]</scope>
    <source>
        <strain>SL483</strain>
    </source>
</reference>
<feature type="chain" id="PRO_1000138369" description="Probable succinate transporter subunit YjjB">
    <location>
        <begin position="1"/>
        <end position="157"/>
    </location>
</feature>
<feature type="transmembrane region" description="Helical" evidence="1">
    <location>
        <begin position="8"/>
        <end position="28"/>
    </location>
</feature>
<feature type="transmembrane region" description="Helical" evidence="1">
    <location>
        <begin position="55"/>
        <end position="75"/>
    </location>
</feature>
<feature type="transmembrane region" description="Helical" evidence="1">
    <location>
        <begin position="87"/>
        <end position="107"/>
    </location>
</feature>
<feature type="transmembrane region" description="Helical" evidence="1">
    <location>
        <begin position="129"/>
        <end position="149"/>
    </location>
</feature>
<gene>
    <name evidence="1" type="primary">yjjB</name>
    <name type="ordered locus">SeAg_B4866</name>
</gene>
<name>YJJB_SALA4</name>
<protein>
    <recommendedName>
        <fullName evidence="1">Probable succinate transporter subunit YjjB</fullName>
    </recommendedName>
</protein>
<accession>B5F504</accession>
<proteinExistence type="inferred from homology"/>
<keyword id="KW-0997">Cell inner membrane</keyword>
<keyword id="KW-1003">Cell membrane</keyword>
<keyword id="KW-0472">Membrane</keyword>
<keyword id="KW-0812">Transmembrane</keyword>
<keyword id="KW-1133">Transmembrane helix</keyword>
<keyword id="KW-0813">Transport</keyword>
<evidence type="ECO:0000255" key="1">
    <source>
        <dbReference type="HAMAP-Rule" id="MF_01191"/>
    </source>
</evidence>
<organism>
    <name type="scientific">Salmonella agona (strain SL483)</name>
    <dbReference type="NCBI Taxonomy" id="454166"/>
    <lineage>
        <taxon>Bacteria</taxon>
        <taxon>Pseudomonadati</taxon>
        <taxon>Pseudomonadota</taxon>
        <taxon>Gammaproteobacteria</taxon>
        <taxon>Enterobacterales</taxon>
        <taxon>Enterobacteriaceae</taxon>
        <taxon>Salmonella</taxon>
    </lineage>
</organism>
<sequence>MGIIDFLLALMQDMILSAIPAVGFAMVFNVPHRALPWCALLGALGHGSRMLMMSAGFNIEWSTFMASLLVGSIGIQWSRWYLAHPKVFTVAAVIPMFPGISAYTAMISAVKISHLGYSEPMMITLLTNFLKASSIVGALSIGLSVPGLWLYRKRPRV</sequence>